<proteinExistence type="inferred from homology"/>
<reference key="1">
    <citation type="submission" date="2008-05" db="EMBL/GenBank/DDBJ databases">
        <title>Complete sequence of Shigella boydii serotype 18 strain BS512.</title>
        <authorList>
            <person name="Rasko D.A."/>
            <person name="Rosovitz M."/>
            <person name="Maurelli A.T."/>
            <person name="Myers G."/>
            <person name="Seshadri R."/>
            <person name="Cer R."/>
            <person name="Jiang L."/>
            <person name="Ravel J."/>
            <person name="Sebastian Y."/>
        </authorList>
    </citation>
    <scope>NUCLEOTIDE SEQUENCE [LARGE SCALE GENOMIC DNA]</scope>
    <source>
        <strain>CDC 3083-94 / BS512</strain>
    </source>
</reference>
<sequence>MNFLAHLHLAHLAESSLSGNLLADFVRGNPEESFPPDVVAGIHMHRRIDVLTDNLPEVREAREWFRRETRRVAPITLDVMWDHFLSRHWSQLSPDFPLQEFICYARKQVMTILPDSPPRFINLNNYLWSEQWLVRYRDMDFIQNVLNGMASRRPRLDALRDSWYDLNAHYTALETRFWQFYPRMMAQASHKAL</sequence>
<accession>B2U407</accession>
<gene>
    <name evidence="1" type="primary">acpH</name>
    <name type="ordered locus">SbBS512_E0323</name>
</gene>
<feature type="chain" id="PRO_1000188819" description="Acyl carrier protein phosphodiesterase">
    <location>
        <begin position="1"/>
        <end position="193"/>
    </location>
</feature>
<comment type="function">
    <text evidence="1">Converts holo-ACP to apo-ACP by hydrolytic cleavage of the phosphopantetheine prosthetic group from ACP.</text>
</comment>
<comment type="catalytic activity">
    <reaction evidence="1">
        <text>holo-[ACP] + H2O = apo-[ACP] + (R)-4'-phosphopantetheine + H(+)</text>
        <dbReference type="Rhea" id="RHEA:20537"/>
        <dbReference type="Rhea" id="RHEA-COMP:9685"/>
        <dbReference type="Rhea" id="RHEA-COMP:9690"/>
        <dbReference type="ChEBI" id="CHEBI:15377"/>
        <dbReference type="ChEBI" id="CHEBI:15378"/>
        <dbReference type="ChEBI" id="CHEBI:29999"/>
        <dbReference type="ChEBI" id="CHEBI:61723"/>
        <dbReference type="ChEBI" id="CHEBI:64479"/>
        <dbReference type="EC" id="3.1.4.14"/>
    </reaction>
</comment>
<comment type="similarity">
    <text evidence="1">Belongs to the AcpH family.</text>
</comment>
<evidence type="ECO:0000255" key="1">
    <source>
        <dbReference type="HAMAP-Rule" id="MF_01950"/>
    </source>
</evidence>
<protein>
    <recommendedName>
        <fullName evidence="1">Acyl carrier protein phosphodiesterase</fullName>
        <shortName evidence="1">ACP phosphodiesterase</shortName>
        <ecNumber evidence="1">3.1.4.14</ecNumber>
    </recommendedName>
</protein>
<dbReference type="EC" id="3.1.4.14" evidence="1"/>
<dbReference type="EMBL" id="CP001063">
    <property type="protein sequence ID" value="ACD10104.1"/>
    <property type="molecule type" value="Genomic_DNA"/>
</dbReference>
<dbReference type="RefSeq" id="WP_001009875.1">
    <property type="nucleotide sequence ID" value="NC_010658.1"/>
</dbReference>
<dbReference type="SMR" id="B2U407"/>
<dbReference type="STRING" id="344609.SbBS512_E0323"/>
<dbReference type="KEGG" id="sbc:SbBS512_E0323"/>
<dbReference type="HOGENOM" id="CLU_099370_1_0_6"/>
<dbReference type="Proteomes" id="UP000001030">
    <property type="component" value="Chromosome"/>
</dbReference>
<dbReference type="GO" id="GO:0008770">
    <property type="term" value="F:[acyl-carrier-protein] phosphodiesterase activity"/>
    <property type="evidence" value="ECO:0007669"/>
    <property type="project" value="UniProtKB-UniRule"/>
</dbReference>
<dbReference type="GO" id="GO:0006633">
    <property type="term" value="P:fatty acid biosynthetic process"/>
    <property type="evidence" value="ECO:0007669"/>
    <property type="project" value="UniProtKB-UniRule"/>
</dbReference>
<dbReference type="HAMAP" id="MF_01950">
    <property type="entry name" value="AcpH"/>
    <property type="match status" value="1"/>
</dbReference>
<dbReference type="InterPro" id="IPR007431">
    <property type="entry name" value="ACP_PD"/>
</dbReference>
<dbReference type="InterPro" id="IPR023491">
    <property type="entry name" value="ACP_phosphodiesterase_gpbac"/>
</dbReference>
<dbReference type="NCBIfam" id="NF007466">
    <property type="entry name" value="PRK10045.1"/>
    <property type="match status" value="1"/>
</dbReference>
<dbReference type="PANTHER" id="PTHR38764">
    <property type="entry name" value="ACYL CARRIER PROTEIN PHOSPHODIESTERASE"/>
    <property type="match status" value="1"/>
</dbReference>
<dbReference type="PANTHER" id="PTHR38764:SF1">
    <property type="entry name" value="ACYL CARRIER PROTEIN PHOSPHODIESTERASE"/>
    <property type="match status" value="1"/>
</dbReference>
<dbReference type="Pfam" id="PF04336">
    <property type="entry name" value="ACP_PD"/>
    <property type="match status" value="1"/>
</dbReference>
<dbReference type="PIRSF" id="PIRSF011489">
    <property type="entry name" value="DUF479"/>
    <property type="match status" value="1"/>
</dbReference>
<keyword id="KW-0275">Fatty acid biosynthesis</keyword>
<keyword id="KW-0276">Fatty acid metabolism</keyword>
<keyword id="KW-0378">Hydrolase</keyword>
<keyword id="KW-0444">Lipid biosynthesis</keyword>
<keyword id="KW-0443">Lipid metabolism</keyword>
<keyword id="KW-1185">Reference proteome</keyword>
<name>ACPH_SHIB3</name>
<organism>
    <name type="scientific">Shigella boydii serotype 18 (strain CDC 3083-94 / BS512)</name>
    <dbReference type="NCBI Taxonomy" id="344609"/>
    <lineage>
        <taxon>Bacteria</taxon>
        <taxon>Pseudomonadati</taxon>
        <taxon>Pseudomonadota</taxon>
        <taxon>Gammaproteobacteria</taxon>
        <taxon>Enterobacterales</taxon>
        <taxon>Enterobacteriaceae</taxon>
        <taxon>Shigella</taxon>
    </lineage>
</organism>